<accession>Q5YQU1</accession>
<dbReference type="EC" id="7.4.2.8" evidence="1"/>
<dbReference type="EMBL" id="AP006618">
    <property type="protein sequence ID" value="BAD59450.1"/>
    <property type="molecule type" value="Genomic_DNA"/>
</dbReference>
<dbReference type="RefSeq" id="WP_011211134.1">
    <property type="nucleotide sequence ID" value="NC_006361.1"/>
</dbReference>
<dbReference type="SMR" id="Q5YQU1"/>
<dbReference type="STRING" id="247156.NFA_45990"/>
<dbReference type="GeneID" id="61135204"/>
<dbReference type="KEGG" id="nfa:NFA_45990"/>
<dbReference type="eggNOG" id="COG0653">
    <property type="taxonomic scope" value="Bacteria"/>
</dbReference>
<dbReference type="HOGENOM" id="CLU_005314_3_0_11"/>
<dbReference type="OrthoDB" id="9805579at2"/>
<dbReference type="Proteomes" id="UP000006820">
    <property type="component" value="Chromosome"/>
</dbReference>
<dbReference type="GO" id="GO:0031522">
    <property type="term" value="C:cell envelope Sec protein transport complex"/>
    <property type="evidence" value="ECO:0007669"/>
    <property type="project" value="TreeGrafter"/>
</dbReference>
<dbReference type="GO" id="GO:0005829">
    <property type="term" value="C:cytosol"/>
    <property type="evidence" value="ECO:0007669"/>
    <property type="project" value="TreeGrafter"/>
</dbReference>
<dbReference type="GO" id="GO:0005886">
    <property type="term" value="C:plasma membrane"/>
    <property type="evidence" value="ECO:0007669"/>
    <property type="project" value="UniProtKB-SubCell"/>
</dbReference>
<dbReference type="GO" id="GO:0005524">
    <property type="term" value="F:ATP binding"/>
    <property type="evidence" value="ECO:0007669"/>
    <property type="project" value="UniProtKB-UniRule"/>
</dbReference>
<dbReference type="GO" id="GO:0008564">
    <property type="term" value="F:protein-exporting ATPase activity"/>
    <property type="evidence" value="ECO:0007669"/>
    <property type="project" value="UniProtKB-EC"/>
</dbReference>
<dbReference type="GO" id="GO:0065002">
    <property type="term" value="P:intracellular protein transmembrane transport"/>
    <property type="evidence" value="ECO:0007669"/>
    <property type="project" value="UniProtKB-UniRule"/>
</dbReference>
<dbReference type="GO" id="GO:0017038">
    <property type="term" value="P:protein import"/>
    <property type="evidence" value="ECO:0007669"/>
    <property type="project" value="InterPro"/>
</dbReference>
<dbReference type="GO" id="GO:0006605">
    <property type="term" value="P:protein targeting"/>
    <property type="evidence" value="ECO:0007669"/>
    <property type="project" value="UniProtKB-UniRule"/>
</dbReference>
<dbReference type="GO" id="GO:0043952">
    <property type="term" value="P:protein transport by the Sec complex"/>
    <property type="evidence" value="ECO:0007669"/>
    <property type="project" value="TreeGrafter"/>
</dbReference>
<dbReference type="CDD" id="cd17928">
    <property type="entry name" value="DEXDc_SecA"/>
    <property type="match status" value="1"/>
</dbReference>
<dbReference type="CDD" id="cd18803">
    <property type="entry name" value="SF2_C_secA"/>
    <property type="match status" value="1"/>
</dbReference>
<dbReference type="FunFam" id="1.10.3060.10:FF:000002">
    <property type="entry name" value="Preprotein translocase subunit SecA"/>
    <property type="match status" value="1"/>
</dbReference>
<dbReference type="FunFam" id="3.40.50.300:FF:000113">
    <property type="entry name" value="Preprotein translocase subunit SecA"/>
    <property type="match status" value="1"/>
</dbReference>
<dbReference type="FunFam" id="3.40.50.300:FF:000334">
    <property type="entry name" value="Protein translocase subunit SecA"/>
    <property type="match status" value="1"/>
</dbReference>
<dbReference type="FunFam" id="3.90.1440.10:FF:000002">
    <property type="entry name" value="Protein translocase subunit SecA"/>
    <property type="match status" value="1"/>
</dbReference>
<dbReference type="Gene3D" id="1.10.3060.10">
    <property type="entry name" value="Helical scaffold and wing domains of SecA"/>
    <property type="match status" value="1"/>
</dbReference>
<dbReference type="Gene3D" id="3.40.50.300">
    <property type="entry name" value="P-loop containing nucleotide triphosphate hydrolases"/>
    <property type="match status" value="2"/>
</dbReference>
<dbReference type="Gene3D" id="3.90.1440.10">
    <property type="entry name" value="SecA, preprotein cross-linking domain"/>
    <property type="match status" value="1"/>
</dbReference>
<dbReference type="HAMAP" id="MF_01382">
    <property type="entry name" value="SecA"/>
    <property type="match status" value="1"/>
</dbReference>
<dbReference type="InterPro" id="IPR014001">
    <property type="entry name" value="Helicase_ATP-bd"/>
</dbReference>
<dbReference type="InterPro" id="IPR001650">
    <property type="entry name" value="Helicase_C-like"/>
</dbReference>
<dbReference type="InterPro" id="IPR027417">
    <property type="entry name" value="P-loop_NTPase"/>
</dbReference>
<dbReference type="InterPro" id="IPR000185">
    <property type="entry name" value="SecA"/>
</dbReference>
<dbReference type="InterPro" id="IPR020937">
    <property type="entry name" value="SecA_CS"/>
</dbReference>
<dbReference type="InterPro" id="IPR011115">
    <property type="entry name" value="SecA_DEAD"/>
</dbReference>
<dbReference type="InterPro" id="IPR014018">
    <property type="entry name" value="SecA_motor_DEAD"/>
</dbReference>
<dbReference type="InterPro" id="IPR011130">
    <property type="entry name" value="SecA_preprotein_X-link_dom"/>
</dbReference>
<dbReference type="InterPro" id="IPR044722">
    <property type="entry name" value="SecA_SF2_C"/>
</dbReference>
<dbReference type="InterPro" id="IPR011116">
    <property type="entry name" value="SecA_Wing/Scaffold"/>
</dbReference>
<dbReference type="InterPro" id="IPR036266">
    <property type="entry name" value="SecA_Wing/Scaffold_sf"/>
</dbReference>
<dbReference type="InterPro" id="IPR036670">
    <property type="entry name" value="SecA_X-link_sf"/>
</dbReference>
<dbReference type="NCBIfam" id="NF009538">
    <property type="entry name" value="PRK12904.1"/>
    <property type="match status" value="1"/>
</dbReference>
<dbReference type="NCBIfam" id="TIGR00963">
    <property type="entry name" value="secA"/>
    <property type="match status" value="1"/>
</dbReference>
<dbReference type="PANTHER" id="PTHR30612:SF0">
    <property type="entry name" value="CHLOROPLAST PROTEIN-TRANSPORTING ATPASE"/>
    <property type="match status" value="1"/>
</dbReference>
<dbReference type="PANTHER" id="PTHR30612">
    <property type="entry name" value="SECA INNER MEMBRANE COMPONENT OF SEC PROTEIN SECRETION SYSTEM"/>
    <property type="match status" value="1"/>
</dbReference>
<dbReference type="Pfam" id="PF21090">
    <property type="entry name" value="P-loop_SecA"/>
    <property type="match status" value="1"/>
</dbReference>
<dbReference type="Pfam" id="PF07517">
    <property type="entry name" value="SecA_DEAD"/>
    <property type="match status" value="1"/>
</dbReference>
<dbReference type="Pfam" id="PF01043">
    <property type="entry name" value="SecA_PP_bind"/>
    <property type="match status" value="1"/>
</dbReference>
<dbReference type="Pfam" id="PF07516">
    <property type="entry name" value="SecA_SW"/>
    <property type="match status" value="1"/>
</dbReference>
<dbReference type="PRINTS" id="PR00906">
    <property type="entry name" value="SECA"/>
</dbReference>
<dbReference type="SMART" id="SM00957">
    <property type="entry name" value="SecA_DEAD"/>
    <property type="match status" value="1"/>
</dbReference>
<dbReference type="SMART" id="SM00958">
    <property type="entry name" value="SecA_PP_bind"/>
    <property type="match status" value="1"/>
</dbReference>
<dbReference type="SUPFAM" id="SSF81886">
    <property type="entry name" value="Helical scaffold and wing domains of SecA"/>
    <property type="match status" value="1"/>
</dbReference>
<dbReference type="SUPFAM" id="SSF52540">
    <property type="entry name" value="P-loop containing nucleoside triphosphate hydrolases"/>
    <property type="match status" value="2"/>
</dbReference>
<dbReference type="SUPFAM" id="SSF81767">
    <property type="entry name" value="Pre-protein crosslinking domain of SecA"/>
    <property type="match status" value="1"/>
</dbReference>
<dbReference type="PROSITE" id="PS01312">
    <property type="entry name" value="SECA"/>
    <property type="match status" value="1"/>
</dbReference>
<dbReference type="PROSITE" id="PS51196">
    <property type="entry name" value="SECA_MOTOR_DEAD"/>
    <property type="match status" value="1"/>
</dbReference>
<evidence type="ECO:0000255" key="1">
    <source>
        <dbReference type="HAMAP-Rule" id="MF_01382"/>
    </source>
</evidence>
<evidence type="ECO:0000256" key="2">
    <source>
        <dbReference type="SAM" id="MobiDB-lite"/>
    </source>
</evidence>
<protein>
    <recommendedName>
        <fullName evidence="1">Protein translocase subunit SecA</fullName>
        <ecNumber evidence="1">7.4.2.8</ecNumber>
    </recommendedName>
</protein>
<feature type="chain" id="PRO_0000318398" description="Protein translocase subunit SecA">
    <location>
        <begin position="1"/>
        <end position="937"/>
    </location>
</feature>
<feature type="region of interest" description="Disordered" evidence="2">
    <location>
        <begin position="881"/>
        <end position="937"/>
    </location>
</feature>
<feature type="compositionally biased region" description="Basic and acidic residues" evidence="2">
    <location>
        <begin position="890"/>
        <end position="900"/>
    </location>
</feature>
<feature type="compositionally biased region" description="Basic and acidic residues" evidence="2">
    <location>
        <begin position="913"/>
        <end position="927"/>
    </location>
</feature>
<feature type="compositionally biased region" description="Basic residues" evidence="2">
    <location>
        <begin position="928"/>
        <end position="937"/>
    </location>
</feature>
<feature type="binding site" evidence="1">
    <location>
        <position position="87"/>
    </location>
    <ligand>
        <name>ATP</name>
        <dbReference type="ChEBI" id="CHEBI:30616"/>
    </ligand>
</feature>
<feature type="binding site" evidence="1">
    <location>
        <begin position="105"/>
        <end position="109"/>
    </location>
    <ligand>
        <name>ATP</name>
        <dbReference type="ChEBI" id="CHEBI:30616"/>
    </ligand>
</feature>
<feature type="binding site" evidence="1">
    <location>
        <position position="494"/>
    </location>
    <ligand>
        <name>ATP</name>
        <dbReference type="ChEBI" id="CHEBI:30616"/>
    </ligand>
</feature>
<gene>
    <name evidence="1" type="primary">secA</name>
    <name type="ordered locus">NFA_45990</name>
</gene>
<sequence length="937" mass="104253">MPALTLTRLLRIGEGRTVKRLAHLADEVLALGSDYEQLTDAELRAKTDEFKQRYADGETLDDLLLEAFAVAREASWRVLNQKHYKVQVMGGAALHLGNIAEMKTGEGKTLTCVLPAYLNALSGDGVHVVTVNDYLAKRDAEWMGRVHRFLGLEVGVILGGMTPPQRRVAYAADITYGTNNEFGFDYLRDNMAHSLDDLVQRGHNFAVVDEVDSILIDEARTPLIISGPADASSKWYAEFARIAPLLKKDVHYEVDIKKRTIGVHEAGVEFVEDQLGIDNLYEAANSPLVSYLNNAIKAKELYQRDKDYIVRDGEVIIVDEFTGRILVGRRYNEGMHQAIEAKEGVEIQPENQTLATITLQNYFRLYDKLSGMTGTAETEAAELHQIYNLGVVPIPTNKPMIRVDQSDLIYKTEEAKFNAVVDDVAERHEKGQPVLIGTTSVERSEYLSKQFTRRGIPHSVLNAKFHEQEAQIIAEAGRPGAVTVATNMAGRGTDIVLGGNPDIIADILLRKQGLDPVETPEEYEAAWLPTLEQVKAQTAADADAVREAGGLYVLGTERHESRRIDNQLRGRSGRQGDPGESRFYLSLGDELMRRFNGAALEAIMTRLNLPDDVPIEAKMVSKAIKSAQTQVEQQNFEIRKNVLKYDEVMNQQRTVIYGERNRILRGEDMEGQVQNMITDVITAYVDGATAEGYVEDWDLEKLWTALKTLYPVSLDYRELTGELDGEPRDLSREELREALLEDAHSAYAKREQEIDGLAGEGSMRNLERQVLLSVLDRKWREHLYEMDYLKEGIGLRAMAQRDPLVEYQREGFDMFTAMLDGLKEESVGFLFNLQVEVQQPQPTGVSVDPGLRSPVGATVPAPAPAAPTPLLAKGITDQAPRGLNYIGPDEGGRASVHSDAEEYGGGTPAAAGTRRERREAARAEGKGKRGPKSRRKH</sequence>
<comment type="function">
    <text evidence="1">Part of the Sec protein translocase complex. Interacts with the SecYEG preprotein conducting channel. Has a central role in coupling the hydrolysis of ATP to the transfer of proteins into and across the cell membrane, serving as an ATP-driven molecular motor driving the stepwise translocation of polypeptide chains across the membrane.</text>
</comment>
<comment type="catalytic activity">
    <reaction evidence="1">
        <text>ATP + H2O + cellular proteinSide 1 = ADP + phosphate + cellular proteinSide 2.</text>
        <dbReference type="EC" id="7.4.2.8"/>
    </reaction>
</comment>
<comment type="subunit">
    <text evidence="1">Monomer and homodimer. Part of the essential Sec protein translocation apparatus which comprises SecA, SecYEG and auxiliary proteins SecDF. Other proteins may also be involved.</text>
</comment>
<comment type="subcellular location">
    <subcellularLocation>
        <location evidence="1">Cell membrane</location>
        <topology evidence="1">Peripheral membrane protein</topology>
        <orientation evidence="1">Cytoplasmic side</orientation>
    </subcellularLocation>
    <subcellularLocation>
        <location evidence="1">Cytoplasm</location>
    </subcellularLocation>
    <text evidence="1">Distribution is 50-50.</text>
</comment>
<comment type="similarity">
    <text evidence="1">Belongs to the SecA family.</text>
</comment>
<keyword id="KW-0067">ATP-binding</keyword>
<keyword id="KW-1003">Cell membrane</keyword>
<keyword id="KW-0963">Cytoplasm</keyword>
<keyword id="KW-0472">Membrane</keyword>
<keyword id="KW-0547">Nucleotide-binding</keyword>
<keyword id="KW-0653">Protein transport</keyword>
<keyword id="KW-1185">Reference proteome</keyword>
<keyword id="KW-1278">Translocase</keyword>
<keyword id="KW-0811">Translocation</keyword>
<keyword id="KW-0813">Transport</keyword>
<name>SECA_NOCFA</name>
<reference key="1">
    <citation type="journal article" date="2004" name="Proc. Natl. Acad. Sci. U.S.A.">
        <title>The complete genomic sequence of Nocardia farcinica IFM 10152.</title>
        <authorList>
            <person name="Ishikawa J."/>
            <person name="Yamashita A."/>
            <person name="Mikami Y."/>
            <person name="Hoshino Y."/>
            <person name="Kurita H."/>
            <person name="Hotta K."/>
            <person name="Shiba T."/>
            <person name="Hattori M."/>
        </authorList>
    </citation>
    <scope>NUCLEOTIDE SEQUENCE [LARGE SCALE GENOMIC DNA]</scope>
    <source>
        <strain>IFM 10152</strain>
    </source>
</reference>
<proteinExistence type="inferred from homology"/>
<organism>
    <name type="scientific">Nocardia farcinica (strain IFM 10152)</name>
    <dbReference type="NCBI Taxonomy" id="247156"/>
    <lineage>
        <taxon>Bacteria</taxon>
        <taxon>Bacillati</taxon>
        <taxon>Actinomycetota</taxon>
        <taxon>Actinomycetes</taxon>
        <taxon>Mycobacteriales</taxon>
        <taxon>Nocardiaceae</taxon>
        <taxon>Nocardia</taxon>
    </lineage>
</organism>